<comment type="function">
    <text evidence="1">Involved in the heme biosynthesis. Catalyzes the aerobic oxidative decarboxylation of propionate groups of rings A and B of coproporphyrinogen-III to yield the vinyl groups in protoporphyrinogen-IX.</text>
</comment>
<comment type="catalytic activity">
    <reaction evidence="1">
        <text>coproporphyrinogen III + O2 + 2 H(+) = protoporphyrinogen IX + 2 CO2 + 2 H2O</text>
        <dbReference type="Rhea" id="RHEA:18257"/>
        <dbReference type="ChEBI" id="CHEBI:15377"/>
        <dbReference type="ChEBI" id="CHEBI:15378"/>
        <dbReference type="ChEBI" id="CHEBI:15379"/>
        <dbReference type="ChEBI" id="CHEBI:16526"/>
        <dbReference type="ChEBI" id="CHEBI:57307"/>
        <dbReference type="ChEBI" id="CHEBI:57309"/>
        <dbReference type="EC" id="1.3.3.3"/>
    </reaction>
</comment>
<comment type="cofactor">
    <cofactor evidence="1">
        <name>a divalent metal cation</name>
        <dbReference type="ChEBI" id="CHEBI:60240"/>
    </cofactor>
</comment>
<comment type="pathway">
    <text evidence="1">Porphyrin-containing compound metabolism; protoporphyrin-IX biosynthesis; protoporphyrinogen-IX from coproporphyrinogen-III (O2 route): step 1/1.</text>
</comment>
<comment type="subunit">
    <text evidence="1">Homodimer.</text>
</comment>
<comment type="subcellular location">
    <subcellularLocation>
        <location evidence="1">Cytoplasm</location>
    </subcellularLocation>
</comment>
<comment type="similarity">
    <text evidence="1">Belongs to the aerobic coproporphyrinogen-III oxidase family.</text>
</comment>
<evidence type="ECO:0000255" key="1">
    <source>
        <dbReference type="HAMAP-Rule" id="MF_00333"/>
    </source>
</evidence>
<proteinExistence type="inferred from homology"/>
<feature type="chain" id="PRO_1000019475" description="Oxygen-dependent coproporphyrinogen-III oxidase">
    <location>
        <begin position="1"/>
        <end position="308"/>
    </location>
</feature>
<feature type="region of interest" description="Important for dimerization" evidence="1">
    <location>
        <begin position="248"/>
        <end position="283"/>
    </location>
</feature>
<feature type="active site" description="Proton donor" evidence="1">
    <location>
        <position position="111"/>
    </location>
</feature>
<feature type="binding site" evidence="1">
    <location>
        <position position="97"/>
    </location>
    <ligand>
        <name>substrate</name>
    </ligand>
</feature>
<feature type="binding site" evidence="1">
    <location>
        <position position="101"/>
    </location>
    <ligand>
        <name>a divalent metal cation</name>
        <dbReference type="ChEBI" id="CHEBI:60240"/>
    </ligand>
</feature>
<feature type="binding site" evidence="1">
    <location>
        <position position="111"/>
    </location>
    <ligand>
        <name>a divalent metal cation</name>
        <dbReference type="ChEBI" id="CHEBI:60240"/>
    </ligand>
</feature>
<feature type="binding site" evidence="1">
    <location>
        <begin position="113"/>
        <end position="115"/>
    </location>
    <ligand>
        <name>substrate</name>
    </ligand>
</feature>
<feature type="binding site" evidence="1">
    <location>
        <position position="153"/>
    </location>
    <ligand>
        <name>a divalent metal cation</name>
        <dbReference type="ChEBI" id="CHEBI:60240"/>
    </ligand>
</feature>
<feature type="binding site" evidence="1">
    <location>
        <position position="183"/>
    </location>
    <ligand>
        <name>a divalent metal cation</name>
        <dbReference type="ChEBI" id="CHEBI:60240"/>
    </ligand>
</feature>
<feature type="binding site" evidence="1">
    <location>
        <begin position="266"/>
        <end position="268"/>
    </location>
    <ligand>
        <name>substrate</name>
    </ligand>
</feature>
<feature type="site" description="Important for dimerization" evidence="1">
    <location>
        <position position="183"/>
    </location>
</feature>
<sequence length="308" mass="34848">MSMTELSGVRTFLLGLQERVTAAVAEVDGGDFITDAWQKEPGEPLQGNGITKILENGEVFERAGCGFSHVQGSRLPPSATQHRPELAGAPFEAMGVSLVFHPRNPYVPTVHMNVRMLAATPVSAGPAEAVCWFGGGMDLTPYYGFDEDAVHFHQTCKDALAPFGGDKYPRFKQWCDEYFYLKHRQEQRGIGGIFFDDFQELGLEQSFAMMQSVADSFLPAYLPIVRRRQSQPYGARERDFQLYRRGRYVEFNLVWDRGTHFGLQSGGRTESILMSMPPLASWSYQHRAEAGSPEERLYKEFLIRRDWV</sequence>
<reference key="1">
    <citation type="journal article" date="2008" name="Appl. Environ. Microbiol.">
        <title>The genome of Polaromonas sp. strain JS666: insights into the evolution of a hydrocarbon- and xenobiotic-degrading bacterium, and features of relevance to biotechnology.</title>
        <authorList>
            <person name="Mattes T.E."/>
            <person name="Alexander A.K."/>
            <person name="Richardson P.M."/>
            <person name="Munk A.C."/>
            <person name="Han C.S."/>
            <person name="Stothard P."/>
            <person name="Coleman N.V."/>
        </authorList>
    </citation>
    <scope>NUCLEOTIDE SEQUENCE [LARGE SCALE GENOMIC DNA]</scope>
    <source>
        <strain>JS666 / ATCC BAA-500</strain>
    </source>
</reference>
<protein>
    <recommendedName>
        <fullName evidence="1">Oxygen-dependent coproporphyrinogen-III oxidase</fullName>
        <shortName evidence="1">CPO</shortName>
        <shortName evidence="1">Coprogen oxidase</shortName>
        <shortName evidence="1">Coproporphyrinogenase</shortName>
        <ecNumber evidence="1">1.3.3.3</ecNumber>
    </recommendedName>
</protein>
<name>HEM6_POLSJ</name>
<accession>Q12C42</accession>
<keyword id="KW-0963">Cytoplasm</keyword>
<keyword id="KW-0350">Heme biosynthesis</keyword>
<keyword id="KW-0479">Metal-binding</keyword>
<keyword id="KW-0560">Oxidoreductase</keyword>
<keyword id="KW-0627">Porphyrin biosynthesis</keyword>
<keyword id="KW-1185">Reference proteome</keyword>
<organism>
    <name type="scientific">Polaromonas sp. (strain JS666 / ATCC BAA-500)</name>
    <dbReference type="NCBI Taxonomy" id="296591"/>
    <lineage>
        <taxon>Bacteria</taxon>
        <taxon>Pseudomonadati</taxon>
        <taxon>Pseudomonadota</taxon>
        <taxon>Betaproteobacteria</taxon>
        <taxon>Burkholderiales</taxon>
        <taxon>Comamonadaceae</taxon>
        <taxon>Polaromonas</taxon>
    </lineage>
</organism>
<dbReference type="EC" id="1.3.3.3" evidence="1"/>
<dbReference type="EMBL" id="CP000316">
    <property type="protein sequence ID" value="ABE43900.1"/>
    <property type="molecule type" value="Genomic_DNA"/>
</dbReference>
<dbReference type="RefSeq" id="WP_011482899.1">
    <property type="nucleotide sequence ID" value="NC_007948.1"/>
</dbReference>
<dbReference type="SMR" id="Q12C42"/>
<dbReference type="STRING" id="296591.Bpro_1970"/>
<dbReference type="KEGG" id="pol:Bpro_1970"/>
<dbReference type="eggNOG" id="COG0408">
    <property type="taxonomic scope" value="Bacteria"/>
</dbReference>
<dbReference type="HOGENOM" id="CLU_026169_0_1_4"/>
<dbReference type="OrthoDB" id="9777553at2"/>
<dbReference type="UniPathway" id="UPA00251">
    <property type="reaction ID" value="UER00322"/>
</dbReference>
<dbReference type="Proteomes" id="UP000001983">
    <property type="component" value="Chromosome"/>
</dbReference>
<dbReference type="GO" id="GO:0005737">
    <property type="term" value="C:cytoplasm"/>
    <property type="evidence" value="ECO:0007669"/>
    <property type="project" value="UniProtKB-SubCell"/>
</dbReference>
<dbReference type="GO" id="GO:0004109">
    <property type="term" value="F:coproporphyrinogen oxidase activity"/>
    <property type="evidence" value="ECO:0007669"/>
    <property type="project" value="UniProtKB-UniRule"/>
</dbReference>
<dbReference type="GO" id="GO:0046872">
    <property type="term" value="F:metal ion binding"/>
    <property type="evidence" value="ECO:0007669"/>
    <property type="project" value="UniProtKB-KW"/>
</dbReference>
<dbReference type="GO" id="GO:0042803">
    <property type="term" value="F:protein homodimerization activity"/>
    <property type="evidence" value="ECO:0000250"/>
    <property type="project" value="UniProtKB"/>
</dbReference>
<dbReference type="GO" id="GO:0006782">
    <property type="term" value="P:protoporphyrinogen IX biosynthetic process"/>
    <property type="evidence" value="ECO:0007669"/>
    <property type="project" value="UniProtKB-UniRule"/>
</dbReference>
<dbReference type="FunFam" id="3.40.1500.10:FF:000001">
    <property type="entry name" value="Oxygen-dependent coproporphyrinogen-III oxidase"/>
    <property type="match status" value="1"/>
</dbReference>
<dbReference type="Gene3D" id="3.40.1500.10">
    <property type="entry name" value="Coproporphyrinogen III oxidase, aerobic"/>
    <property type="match status" value="1"/>
</dbReference>
<dbReference type="HAMAP" id="MF_00333">
    <property type="entry name" value="Coprogen_oxidas"/>
    <property type="match status" value="1"/>
</dbReference>
<dbReference type="InterPro" id="IPR001260">
    <property type="entry name" value="Coprogen_oxidase_aer"/>
</dbReference>
<dbReference type="InterPro" id="IPR036406">
    <property type="entry name" value="Coprogen_oxidase_aer_sf"/>
</dbReference>
<dbReference type="InterPro" id="IPR018375">
    <property type="entry name" value="Coprogen_oxidase_CS"/>
</dbReference>
<dbReference type="NCBIfam" id="NF003727">
    <property type="entry name" value="PRK05330.1"/>
    <property type="match status" value="1"/>
</dbReference>
<dbReference type="PANTHER" id="PTHR10755">
    <property type="entry name" value="COPROPORPHYRINOGEN III OXIDASE, MITOCHONDRIAL"/>
    <property type="match status" value="1"/>
</dbReference>
<dbReference type="PANTHER" id="PTHR10755:SF0">
    <property type="entry name" value="OXYGEN-DEPENDENT COPROPORPHYRINOGEN-III OXIDASE, MITOCHONDRIAL"/>
    <property type="match status" value="1"/>
</dbReference>
<dbReference type="Pfam" id="PF01218">
    <property type="entry name" value="Coprogen_oxidas"/>
    <property type="match status" value="1"/>
</dbReference>
<dbReference type="PIRSF" id="PIRSF000166">
    <property type="entry name" value="Coproporphyri_ox"/>
    <property type="match status" value="1"/>
</dbReference>
<dbReference type="PRINTS" id="PR00073">
    <property type="entry name" value="COPRGNOXDASE"/>
</dbReference>
<dbReference type="SUPFAM" id="SSF102886">
    <property type="entry name" value="Coproporphyrinogen III oxidase"/>
    <property type="match status" value="1"/>
</dbReference>
<dbReference type="PROSITE" id="PS01021">
    <property type="entry name" value="COPROGEN_OXIDASE"/>
    <property type="match status" value="1"/>
</dbReference>
<gene>
    <name evidence="1" type="primary">hemF</name>
    <name type="ordered locus">Bpro_1970</name>
</gene>